<accession>O53467</accession>
<accession>F2GG69</accession>
<accession>I6X2Z5</accession>
<accession>Q7D7M1</accession>
<comment type="function">
    <text evidence="4">Putative antitoxin component of a type II toxin-antitoxin (TA) system. Its cognate toxin would be HigB2.</text>
</comment>
<comment type="induction">
    <text evidence="2">Induced in persister cells in response to D-cycloserine.</text>
</comment>
<keyword id="KW-0002">3D-structure</keyword>
<keyword id="KW-0238">DNA-binding</keyword>
<keyword id="KW-1185">Reference proteome</keyword>
<keyword id="KW-1277">Toxin-antitoxin system</keyword>
<reference key="1">
    <citation type="journal article" date="1998" name="Nature">
        <title>Deciphering the biology of Mycobacterium tuberculosis from the complete genome sequence.</title>
        <authorList>
            <person name="Cole S.T."/>
            <person name="Brosch R."/>
            <person name="Parkhill J."/>
            <person name="Garnier T."/>
            <person name="Churcher C.M."/>
            <person name="Harris D.E."/>
            <person name="Gordon S.V."/>
            <person name="Eiglmeier K."/>
            <person name="Gas S."/>
            <person name="Barry C.E. III"/>
            <person name="Tekaia F."/>
            <person name="Badcock K."/>
            <person name="Basham D."/>
            <person name="Brown D."/>
            <person name="Chillingworth T."/>
            <person name="Connor R."/>
            <person name="Davies R.M."/>
            <person name="Devlin K."/>
            <person name="Feltwell T."/>
            <person name="Gentles S."/>
            <person name="Hamlin N."/>
            <person name="Holroyd S."/>
            <person name="Hornsby T."/>
            <person name="Jagels K."/>
            <person name="Krogh A."/>
            <person name="McLean J."/>
            <person name="Moule S."/>
            <person name="Murphy L.D."/>
            <person name="Oliver S."/>
            <person name="Osborne J."/>
            <person name="Quail M.A."/>
            <person name="Rajandream M.A."/>
            <person name="Rogers J."/>
            <person name="Rutter S."/>
            <person name="Seeger K."/>
            <person name="Skelton S."/>
            <person name="Squares S."/>
            <person name="Squares R."/>
            <person name="Sulston J.E."/>
            <person name="Taylor K."/>
            <person name="Whitehead S."/>
            <person name="Barrell B.G."/>
        </authorList>
    </citation>
    <scope>NUCLEOTIDE SEQUENCE [LARGE SCALE GENOMIC DNA]</scope>
    <source>
        <strain>ATCC 25618 / H37Rv</strain>
    </source>
</reference>
<reference key="2">
    <citation type="submission" date="2013-11" db="EMBL/GenBank/DDBJ databases">
        <title>The genome sequence of Mycobacterium tuberculosis H37Rv.</title>
        <authorList>
            <consortium name="The Broad Institute Genome Sequencing Platform"/>
            <person name="Galagan J."/>
            <person name="Kreiswirth B."/>
            <person name="Dobos K."/>
            <person name="Fortune S."/>
            <person name="Fitzgerald M."/>
            <person name="Young S.K."/>
            <person name="Zeng Q."/>
            <person name="Gargeya S."/>
            <person name="Abouelleil A."/>
            <person name="Alvarado L."/>
            <person name="Berlin A.M."/>
            <person name="Chapman S.B."/>
            <person name="Gainer-Dewar J."/>
            <person name="Goldberg J."/>
            <person name="Gnerre S."/>
            <person name="Griggs A."/>
            <person name="Gujja S."/>
            <person name="Hansen M."/>
            <person name="Howarth C."/>
            <person name="Imamovic A."/>
            <person name="Larimer J."/>
            <person name="McCowan C."/>
            <person name="Murphy C."/>
            <person name="Pearson M."/>
            <person name="Poon T."/>
            <person name="Priest M."/>
            <person name="Roberts A."/>
            <person name="Saif S."/>
            <person name="Shea T."/>
            <person name="Sykes S."/>
            <person name="Wortman J."/>
            <person name="Nusbaum C."/>
            <person name="Birren B."/>
        </authorList>
    </citation>
    <scope>NUCLEOTIDE SEQUENCE [LARGE SCALE GENOMIC DNA]</scope>
    <source>
        <strain>ATCC 25618 / H37Rv</strain>
    </source>
</reference>
<reference key="3">
    <citation type="submission" date="2014-04" db="EMBL/GenBank/DDBJ databases">
        <title>The genome sequence of Mycobacterium tuberculosis H37Rv.</title>
        <authorList>
            <consortium name="The Broad Institute Genomics Platform"/>
            <consortium name="The Broad Institute Genome Sequencing Center for Infectious Disease"/>
            <person name="Earl A.M."/>
            <person name="Kreiswirth B."/>
            <person name="Gomez J."/>
            <person name="Victor T."/>
            <person name="Desjardins C."/>
            <person name="Abeel T."/>
            <person name="Young S."/>
            <person name="Zeng Q."/>
            <person name="Gargeya S."/>
            <person name="Abouelleil A."/>
            <person name="Alvarado L."/>
            <person name="Chapman S.B."/>
            <person name="Gainer-Dewar J."/>
            <person name="Goldberg J."/>
            <person name="Griggs A."/>
            <person name="Gujja S."/>
            <person name="Hansen M."/>
            <person name="Howarth C."/>
            <person name="Imamovic A."/>
            <person name="Larimer J."/>
            <person name="Murphy C."/>
            <person name="Naylor J."/>
            <person name="Pearson M."/>
            <person name="Poon T.W."/>
            <person name="Priest M."/>
            <person name="Roberts A."/>
            <person name="Saif S."/>
            <person name="Shea T."/>
            <person name="Sykes S."/>
            <person name="Wortman J."/>
            <person name="Nusbaum C."/>
            <person name="Birren B."/>
        </authorList>
    </citation>
    <scope>NUCLEOTIDE SEQUENCE [LARGE SCALE GENOMIC DNA]</scope>
    <source>
        <strain>ATCC 25618 / H37Rv</strain>
    </source>
</reference>
<reference key="4">
    <citation type="journal article" date="2011" name="MBio">
        <title>Characterization and transcriptome analysis of Mycobacterium tuberculosis persisters.</title>
        <authorList>
            <person name="Keren I."/>
            <person name="Minami S."/>
            <person name="Rubin E."/>
            <person name="Lewis K."/>
        </authorList>
    </citation>
    <scope>INDUCTION IN PERSISTER CELLS</scope>
    <source>
        <strain>ATCC 25618 / H37Rv</strain>
    </source>
</reference>
<reference key="5">
    <citation type="journal article" date="2011" name="Mol. Cell. Proteomics">
        <title>Proteogenomic analysis of Mycobacterium tuberculosis by high resolution mass spectrometry.</title>
        <authorList>
            <person name="Kelkar D.S."/>
            <person name="Kumar D."/>
            <person name="Kumar P."/>
            <person name="Balakrishnan L."/>
            <person name="Muthusamy B."/>
            <person name="Yadav A.K."/>
            <person name="Shrivastava P."/>
            <person name="Marimuthu A."/>
            <person name="Anand S."/>
            <person name="Sundaram H."/>
            <person name="Kingsbury R."/>
            <person name="Harsha H.C."/>
            <person name="Nair B."/>
            <person name="Prasad T.S."/>
            <person name="Chauhan D.S."/>
            <person name="Katoch K."/>
            <person name="Katoch V.M."/>
            <person name="Kumar P."/>
            <person name="Chaerkady R."/>
            <person name="Ramachandran S."/>
            <person name="Dash D."/>
            <person name="Pandey A."/>
        </authorList>
    </citation>
    <scope>IDENTIFICATION BY MASS SPECTROMETRY [LARGE SCALE ANALYSIS]</scope>
    <source>
        <strain>ATCC 25618 / H37Rv</strain>
    </source>
</reference>
<reference key="6">
    <citation type="journal article" date="2014" name="Toxins">
        <title>Multiple toxin-antitoxin systems in Mycobacterium tuberculosis.</title>
        <authorList>
            <person name="Sala A."/>
            <person name="Bordes P."/>
            <person name="Genevaux P."/>
        </authorList>
    </citation>
    <scope>DISCUSSION OF POSSIBLE FUNCTION</scope>
    <source>
        <strain>ATCC 25618 / H37Rv</strain>
    </source>
</reference>
<protein>
    <recommendedName>
        <fullName evidence="3">Putative antitoxin HigA2</fullName>
    </recommendedName>
</protein>
<organism>
    <name type="scientific">Mycobacterium tuberculosis (strain ATCC 25618 / H37Rv)</name>
    <dbReference type="NCBI Taxonomy" id="83332"/>
    <lineage>
        <taxon>Bacteria</taxon>
        <taxon>Bacillati</taxon>
        <taxon>Actinomycetota</taxon>
        <taxon>Actinomycetes</taxon>
        <taxon>Mycobacteriales</taxon>
        <taxon>Mycobacteriaceae</taxon>
        <taxon>Mycobacterium</taxon>
        <taxon>Mycobacterium tuberculosis complex</taxon>
    </lineage>
</organism>
<proteinExistence type="evidence at protein level"/>
<dbReference type="EMBL" id="AL123456">
    <property type="protein sequence ID" value="CCP44793.1"/>
    <property type="molecule type" value="Genomic_DNA"/>
</dbReference>
<dbReference type="EMBL" id="CP003248">
    <property type="protein sequence ID" value="AFN49961.1"/>
    <property type="molecule type" value="Genomic_DNA"/>
</dbReference>
<dbReference type="EMBL" id="JLDD01000023">
    <property type="protein sequence ID" value="KBJ33165.1"/>
    <property type="molecule type" value="Genomic_DNA"/>
</dbReference>
<dbReference type="RefSeq" id="NP_216537.1">
    <property type="nucleotide sequence ID" value="NC_000962.3"/>
</dbReference>
<dbReference type="RefSeq" id="WP_003410124.1">
    <property type="nucleotide sequence ID" value="NZ_NVQJ01000046.1"/>
</dbReference>
<dbReference type="PDB" id="7EWC">
    <property type="method" value="X-ray"/>
    <property type="resolution" value="2.05 A"/>
    <property type="chains" value="A/B/C/D=1-101"/>
</dbReference>
<dbReference type="PDB" id="7EWD">
    <property type="method" value="X-ray"/>
    <property type="resolution" value="3.20 A"/>
    <property type="chains" value="A/B/C/D=1-101"/>
</dbReference>
<dbReference type="PDB" id="7EWE">
    <property type="method" value="X-ray"/>
    <property type="resolution" value="3.41 A"/>
    <property type="chains" value="A/B/C/D/E=1-101"/>
</dbReference>
<dbReference type="PDBsum" id="7EWC"/>
<dbReference type="PDBsum" id="7EWD"/>
<dbReference type="PDBsum" id="7EWE"/>
<dbReference type="SMR" id="O53467"/>
<dbReference type="STRING" id="83332.Rv2021c"/>
<dbReference type="PaxDb" id="83332-Rv2021c"/>
<dbReference type="DNASU" id="888092"/>
<dbReference type="GeneID" id="888092"/>
<dbReference type="KEGG" id="mtu:Rv2021c"/>
<dbReference type="KEGG" id="mtv:RVBD_2021c"/>
<dbReference type="PATRIC" id="fig|83332.111.peg.2252"/>
<dbReference type="TubercuList" id="Rv2021c"/>
<dbReference type="eggNOG" id="COG1396">
    <property type="taxonomic scope" value="Bacteria"/>
</dbReference>
<dbReference type="HOGENOM" id="CLU_066192_13_0_11"/>
<dbReference type="InParanoid" id="O53467"/>
<dbReference type="OrthoDB" id="5738376at2"/>
<dbReference type="PhylomeDB" id="O53467"/>
<dbReference type="Proteomes" id="UP000001584">
    <property type="component" value="Chromosome"/>
</dbReference>
<dbReference type="GO" id="GO:0003677">
    <property type="term" value="F:DNA binding"/>
    <property type="evidence" value="ECO:0000314"/>
    <property type="project" value="MTBBASE"/>
</dbReference>
<dbReference type="CDD" id="cd00093">
    <property type="entry name" value="HTH_XRE"/>
    <property type="match status" value="1"/>
</dbReference>
<dbReference type="Gene3D" id="1.10.260.40">
    <property type="entry name" value="lambda repressor-like DNA-binding domains"/>
    <property type="match status" value="1"/>
</dbReference>
<dbReference type="InterPro" id="IPR001387">
    <property type="entry name" value="Cro/C1-type_HTH"/>
</dbReference>
<dbReference type="InterPro" id="IPR010982">
    <property type="entry name" value="Lambda_DNA-bd_dom_sf"/>
</dbReference>
<dbReference type="Pfam" id="PF01381">
    <property type="entry name" value="HTH_3"/>
    <property type="match status" value="1"/>
</dbReference>
<dbReference type="SMART" id="SM00530">
    <property type="entry name" value="HTH_XRE"/>
    <property type="match status" value="1"/>
</dbReference>
<dbReference type="SUPFAM" id="SSF47413">
    <property type="entry name" value="lambda repressor-like DNA-binding domains"/>
    <property type="match status" value="1"/>
</dbReference>
<dbReference type="PROSITE" id="PS50943">
    <property type="entry name" value="HTH_CROC1"/>
    <property type="match status" value="1"/>
</dbReference>
<name>HIGA2_MYCTU</name>
<sequence length="101" mass="11292">MAMTLRDMDAVRPVNREAVDRHKARMRDEVRAFRLRELRAAQSLTQVQVAALAHIRQSRVSSIENGDIGSAQVNTLRKYVSALGGELDITVRLGDETFTLA</sequence>
<gene>
    <name evidence="3" type="primary">higA2</name>
    <name type="ordered locus">Rv2021c</name>
    <name type="ordered locus">RVBD_2021c</name>
    <name type="ORF">P425_02092</name>
</gene>
<evidence type="ECO:0000255" key="1">
    <source>
        <dbReference type="PROSITE-ProRule" id="PRU00257"/>
    </source>
</evidence>
<evidence type="ECO:0000269" key="2">
    <source>
    </source>
</evidence>
<evidence type="ECO:0000303" key="3">
    <source>
    </source>
</evidence>
<evidence type="ECO:0000305" key="4">
    <source>
    </source>
</evidence>
<evidence type="ECO:0007829" key="5">
    <source>
        <dbReference type="PDB" id="7EWC"/>
    </source>
</evidence>
<feature type="chain" id="PRO_0000432911" description="Putative antitoxin HigA2">
    <location>
        <begin position="1"/>
        <end position="101"/>
    </location>
</feature>
<feature type="domain" description="HTH cro/C1-type" evidence="1">
    <location>
        <begin position="35"/>
        <end position="90"/>
    </location>
</feature>
<feature type="DNA-binding region" description="H-T-H motif" evidence="1">
    <location>
        <begin position="46"/>
        <end position="65"/>
    </location>
</feature>
<feature type="helix" evidence="5">
    <location>
        <begin position="32"/>
        <end position="40"/>
    </location>
</feature>
<feature type="turn" evidence="5">
    <location>
        <begin position="41"/>
        <end position="43"/>
    </location>
</feature>
<feature type="helix" evidence="5">
    <location>
        <begin position="46"/>
        <end position="53"/>
    </location>
</feature>
<feature type="helix" evidence="5">
    <location>
        <begin position="57"/>
        <end position="64"/>
    </location>
</feature>
<feature type="helix" evidence="5">
    <location>
        <begin position="73"/>
        <end position="82"/>
    </location>
</feature>
<feature type="strand" evidence="5">
    <location>
        <begin position="86"/>
        <end position="93"/>
    </location>
</feature>
<feature type="strand" evidence="5">
    <location>
        <begin position="96"/>
        <end position="99"/>
    </location>
</feature>